<organism>
    <name type="scientific">Vaccinia virus (strain Ankara)</name>
    <name type="common">VACV</name>
    <dbReference type="NCBI Taxonomy" id="126794"/>
    <lineage>
        <taxon>Viruses</taxon>
        <taxon>Varidnaviria</taxon>
        <taxon>Bamfordvirae</taxon>
        <taxon>Nucleocytoviricota</taxon>
        <taxon>Pokkesviricetes</taxon>
        <taxon>Chitovirales</taxon>
        <taxon>Poxviridae</taxon>
        <taxon>Chordopoxvirinae</taxon>
        <taxon>Orthopoxvirus</taxon>
        <taxon>Vaccinia virus</taxon>
    </lineage>
</organism>
<dbReference type="EMBL" id="U94848">
    <property type="protein sequence ID" value="AAB96537.1"/>
    <property type="molecule type" value="Genomic_DNA"/>
</dbReference>
<dbReference type="EMBL" id="AY603355">
    <property type="protein sequence ID" value="AAT10556.1"/>
    <property type="molecule type" value="Genomic_DNA"/>
</dbReference>
<dbReference type="PIR" id="T37431">
    <property type="entry name" value="T37431"/>
</dbReference>
<dbReference type="SMR" id="O57246"/>
<dbReference type="Proteomes" id="UP000159908">
    <property type="component" value="Segment"/>
</dbReference>
<dbReference type="Proteomes" id="UP000172909">
    <property type="component" value="Segment"/>
</dbReference>
<dbReference type="GO" id="GO:0030430">
    <property type="term" value="C:host cell cytoplasm"/>
    <property type="evidence" value="ECO:0007669"/>
    <property type="project" value="UniProtKB-SubCell"/>
</dbReference>
<dbReference type="GO" id="GO:0046872">
    <property type="term" value="F:metal ion binding"/>
    <property type="evidence" value="ECO:0007669"/>
    <property type="project" value="InterPro"/>
</dbReference>
<dbReference type="GO" id="GO:0006801">
    <property type="term" value="P:superoxide metabolic process"/>
    <property type="evidence" value="ECO:0007669"/>
    <property type="project" value="InterPro"/>
</dbReference>
<dbReference type="Gene3D" id="2.60.40.200">
    <property type="entry name" value="Superoxide dismutase, copper/zinc binding domain"/>
    <property type="match status" value="1"/>
</dbReference>
<dbReference type="InterPro" id="IPR036423">
    <property type="entry name" value="SOD-like_Cu/Zn_dom_sf"/>
</dbReference>
<dbReference type="SUPFAM" id="SSF49329">
    <property type="entry name" value="Cu,Zn superoxide dismutase-like"/>
    <property type="match status" value="1"/>
</dbReference>
<proteinExistence type="inferred from homology"/>
<gene>
    <name type="ordered locus">MVA158R</name>
    <name type="ordered locus">ACAM3000_MVA_158</name>
</gene>
<comment type="function">
    <text evidence="1">Virion protein with no enzymatic activity.</text>
</comment>
<comment type="subcellular location">
    <subcellularLocation>
        <location evidence="1">Host cytoplasm</location>
    </subcellularLocation>
</comment>
<comment type="similarity">
    <text evidence="2">Belongs to the Cu-Zn superoxide dismutase family.</text>
</comment>
<name>SODL_VACCA</name>
<protein>
    <recommendedName>
        <fullName>Cu-Zn superoxide dismutase-like protein</fullName>
    </recommendedName>
</protein>
<feature type="chain" id="PRO_0000164164" description="Cu-Zn superoxide dismutase-like protein">
    <location>
        <begin position="1"/>
        <end position="121"/>
    </location>
</feature>
<feature type="disulfide bond" evidence="1">
    <location>
        <begin position="48"/>
        <end position="98"/>
    </location>
</feature>
<sequence length="121" mass="13306">MAVCIIDHDNIRGVIYFEPVHGKDKVIGLKSGTYSLIIHRYGDISQGCDSIGSPEIFIGNIFVNRYGVAYVYLDTDVNISTIIGKALSISKNDQRLACGVIGISYINEKIIHFLTINENGV</sequence>
<accession>O57246</accession>
<keyword id="KW-1015">Disulfide bond</keyword>
<keyword id="KW-1035">Host cytoplasm</keyword>
<evidence type="ECO:0000250" key="1"/>
<evidence type="ECO:0000305" key="2"/>
<reference key="1">
    <citation type="journal article" date="1998" name="Virology">
        <title>The complete genomic sequence of the modified vaccinia Ankara strain: comparison with other orthopoxviruses.</title>
        <authorList>
            <person name="Antoine G."/>
            <person name="Scheiflinger F."/>
            <person name="Dorner F."/>
            <person name="Falkner F.G."/>
        </authorList>
    </citation>
    <scope>NUCLEOTIDE SEQUENCE [LARGE SCALE GENOMIC DNA]</scope>
</reference>
<reference key="2">
    <citation type="submission" date="2004-04" db="EMBL/GenBank/DDBJ databases">
        <authorList>
            <person name="Esposito J.J."/>
            <person name="Frace M."/>
            <person name="Sammons S.A."/>
            <person name="Olsen-Rasmussen M.S."/>
            <person name="Osborne J."/>
            <person name="Khristova M."/>
            <person name="Wohlhueter R.M."/>
        </authorList>
    </citation>
    <scope>NUCLEOTIDE SEQUENCE [LARGE SCALE GENOMIC DNA]</scope>
    <source>
        <strain>Isolate Acambis 3000</strain>
    </source>
</reference>
<organismHost>
    <name type="scientific">Homo sapiens</name>
    <name type="common">Human</name>
    <dbReference type="NCBI Taxonomy" id="9606"/>
</organismHost>